<name>RF1_BORBR</name>
<gene>
    <name evidence="1" type="primary">prfA</name>
    <name type="ordered locus">BB0384</name>
</gene>
<keyword id="KW-0963">Cytoplasm</keyword>
<keyword id="KW-0488">Methylation</keyword>
<keyword id="KW-0648">Protein biosynthesis</keyword>
<evidence type="ECO:0000255" key="1">
    <source>
        <dbReference type="HAMAP-Rule" id="MF_00093"/>
    </source>
</evidence>
<feature type="chain" id="PRO_0000177638" description="Peptide chain release factor 1">
    <location>
        <begin position="1"/>
        <end position="360"/>
    </location>
</feature>
<feature type="modified residue" description="N5-methylglutamine" evidence="1">
    <location>
        <position position="235"/>
    </location>
</feature>
<reference key="1">
    <citation type="journal article" date="2003" name="Nat. Genet.">
        <title>Comparative analysis of the genome sequences of Bordetella pertussis, Bordetella parapertussis and Bordetella bronchiseptica.</title>
        <authorList>
            <person name="Parkhill J."/>
            <person name="Sebaihia M."/>
            <person name="Preston A."/>
            <person name="Murphy L.D."/>
            <person name="Thomson N.R."/>
            <person name="Harris D.E."/>
            <person name="Holden M.T.G."/>
            <person name="Churcher C.M."/>
            <person name="Bentley S.D."/>
            <person name="Mungall K.L."/>
            <person name="Cerdeno-Tarraga A.-M."/>
            <person name="Temple L."/>
            <person name="James K.D."/>
            <person name="Harris B."/>
            <person name="Quail M.A."/>
            <person name="Achtman M."/>
            <person name="Atkin R."/>
            <person name="Baker S."/>
            <person name="Basham D."/>
            <person name="Bason N."/>
            <person name="Cherevach I."/>
            <person name="Chillingworth T."/>
            <person name="Collins M."/>
            <person name="Cronin A."/>
            <person name="Davis P."/>
            <person name="Doggett J."/>
            <person name="Feltwell T."/>
            <person name="Goble A."/>
            <person name="Hamlin N."/>
            <person name="Hauser H."/>
            <person name="Holroyd S."/>
            <person name="Jagels K."/>
            <person name="Leather S."/>
            <person name="Moule S."/>
            <person name="Norberczak H."/>
            <person name="O'Neil S."/>
            <person name="Ormond D."/>
            <person name="Price C."/>
            <person name="Rabbinowitsch E."/>
            <person name="Rutter S."/>
            <person name="Sanders M."/>
            <person name="Saunders D."/>
            <person name="Seeger K."/>
            <person name="Sharp S."/>
            <person name="Simmonds M."/>
            <person name="Skelton J."/>
            <person name="Squares R."/>
            <person name="Squares S."/>
            <person name="Stevens K."/>
            <person name="Unwin L."/>
            <person name="Whitehead S."/>
            <person name="Barrell B.G."/>
            <person name="Maskell D.J."/>
        </authorList>
    </citation>
    <scope>NUCLEOTIDE SEQUENCE [LARGE SCALE GENOMIC DNA]</scope>
    <source>
        <strain>ATCC BAA-588 / NCTC 13252 / RB50</strain>
    </source>
</reference>
<protein>
    <recommendedName>
        <fullName evidence="1">Peptide chain release factor 1</fullName>
        <shortName evidence="1">RF-1</shortName>
    </recommendedName>
</protein>
<organism>
    <name type="scientific">Bordetella bronchiseptica (strain ATCC BAA-588 / NCTC 13252 / RB50)</name>
    <name type="common">Alcaligenes bronchisepticus</name>
    <dbReference type="NCBI Taxonomy" id="257310"/>
    <lineage>
        <taxon>Bacteria</taxon>
        <taxon>Pseudomonadati</taxon>
        <taxon>Pseudomonadota</taxon>
        <taxon>Betaproteobacteria</taxon>
        <taxon>Burkholderiales</taxon>
        <taxon>Alcaligenaceae</taxon>
        <taxon>Bordetella</taxon>
    </lineage>
</organism>
<sequence>MKPSMRSRLEQLAHRLIEVDALLAEPETAADMDRFRKLSRERAELEPVVEAFNAFLGVEADVATAQEMLSDPDMKAMAEDEIKTGRARIEEMEAALQLLLLPRDPDDGRSLFLEIRAGTGGDESALFSGDLLRMYTRYAETRGWRVEIMSESESELGGYKEVIARIDGDGAYGRLKFESGAHRVQRVPATEAQGRIHTSACTVAVMPEADAMSDIVINPSDLRIDTFRASGAGGQHINKTDSAVRITHVPTGLVVECQDDRSQHRNKDKAMQVLAARLKDKEMRERQSKEAAERKSLIGSGDRSERIRTYNYPQGRVTDHRINLTLYKLQQIMEGDLDELTGALLAEHQAEQLAALGHDL</sequence>
<accession>Q7WQE9</accession>
<comment type="function">
    <text evidence="1">Peptide chain release factor 1 directs the termination of translation in response to the peptide chain termination codons UAG and UAA.</text>
</comment>
<comment type="subcellular location">
    <subcellularLocation>
        <location evidence="1">Cytoplasm</location>
    </subcellularLocation>
</comment>
<comment type="PTM">
    <text evidence="1">Methylated by PrmC. Methylation increases the termination efficiency of RF1.</text>
</comment>
<comment type="similarity">
    <text evidence="1">Belongs to the prokaryotic/mitochondrial release factor family.</text>
</comment>
<dbReference type="EMBL" id="BX640438">
    <property type="protein sequence ID" value="CAE30882.1"/>
    <property type="molecule type" value="Genomic_DNA"/>
</dbReference>
<dbReference type="RefSeq" id="WP_003807618.1">
    <property type="nucleotide sequence ID" value="NC_002927.3"/>
</dbReference>
<dbReference type="SMR" id="Q7WQE9"/>
<dbReference type="GeneID" id="69603285"/>
<dbReference type="KEGG" id="bbr:BB0384"/>
<dbReference type="eggNOG" id="COG0216">
    <property type="taxonomic scope" value="Bacteria"/>
</dbReference>
<dbReference type="HOGENOM" id="CLU_036856_0_1_4"/>
<dbReference type="Proteomes" id="UP000001027">
    <property type="component" value="Chromosome"/>
</dbReference>
<dbReference type="GO" id="GO:0005737">
    <property type="term" value="C:cytoplasm"/>
    <property type="evidence" value="ECO:0007669"/>
    <property type="project" value="UniProtKB-SubCell"/>
</dbReference>
<dbReference type="GO" id="GO:0016149">
    <property type="term" value="F:translation release factor activity, codon specific"/>
    <property type="evidence" value="ECO:0007669"/>
    <property type="project" value="UniProtKB-UniRule"/>
</dbReference>
<dbReference type="FunFam" id="3.30.160.20:FF:000004">
    <property type="entry name" value="Peptide chain release factor 1"/>
    <property type="match status" value="1"/>
</dbReference>
<dbReference type="FunFam" id="3.30.70.1660:FF:000002">
    <property type="entry name" value="Peptide chain release factor 1"/>
    <property type="match status" value="1"/>
</dbReference>
<dbReference type="FunFam" id="3.30.70.1660:FF:000004">
    <property type="entry name" value="Peptide chain release factor 1"/>
    <property type="match status" value="1"/>
</dbReference>
<dbReference type="Gene3D" id="3.30.160.20">
    <property type="match status" value="1"/>
</dbReference>
<dbReference type="Gene3D" id="3.30.70.1660">
    <property type="match status" value="2"/>
</dbReference>
<dbReference type="Gene3D" id="6.10.140.1950">
    <property type="match status" value="1"/>
</dbReference>
<dbReference type="HAMAP" id="MF_00093">
    <property type="entry name" value="Rel_fac_1"/>
    <property type="match status" value="1"/>
</dbReference>
<dbReference type="InterPro" id="IPR005139">
    <property type="entry name" value="PCRF"/>
</dbReference>
<dbReference type="InterPro" id="IPR000352">
    <property type="entry name" value="Pep_chain_release_fac_I"/>
</dbReference>
<dbReference type="InterPro" id="IPR045853">
    <property type="entry name" value="Pep_chain_release_fac_I_sf"/>
</dbReference>
<dbReference type="InterPro" id="IPR050057">
    <property type="entry name" value="Prokaryotic/Mito_RF"/>
</dbReference>
<dbReference type="InterPro" id="IPR004373">
    <property type="entry name" value="RF-1"/>
</dbReference>
<dbReference type="NCBIfam" id="TIGR00019">
    <property type="entry name" value="prfA"/>
    <property type="match status" value="1"/>
</dbReference>
<dbReference type="NCBIfam" id="NF001859">
    <property type="entry name" value="PRK00591.1"/>
    <property type="match status" value="1"/>
</dbReference>
<dbReference type="PANTHER" id="PTHR43804">
    <property type="entry name" value="LD18447P"/>
    <property type="match status" value="1"/>
</dbReference>
<dbReference type="PANTHER" id="PTHR43804:SF7">
    <property type="entry name" value="LD18447P"/>
    <property type="match status" value="1"/>
</dbReference>
<dbReference type="Pfam" id="PF03462">
    <property type="entry name" value="PCRF"/>
    <property type="match status" value="1"/>
</dbReference>
<dbReference type="Pfam" id="PF00472">
    <property type="entry name" value="RF-1"/>
    <property type="match status" value="1"/>
</dbReference>
<dbReference type="SMART" id="SM00937">
    <property type="entry name" value="PCRF"/>
    <property type="match status" value="1"/>
</dbReference>
<dbReference type="SUPFAM" id="SSF75620">
    <property type="entry name" value="Release factor"/>
    <property type="match status" value="1"/>
</dbReference>
<dbReference type="PROSITE" id="PS00745">
    <property type="entry name" value="RF_PROK_I"/>
    <property type="match status" value="1"/>
</dbReference>
<proteinExistence type="inferred from homology"/>